<proteinExistence type="evidence at transcript level"/>
<dbReference type="EMBL" id="AY312576">
    <property type="protein sequence ID" value="AAP83930.1"/>
    <property type="molecule type" value="mRNA"/>
</dbReference>
<dbReference type="SMR" id="Q7X999"/>
<dbReference type="GO" id="GO:0009570">
    <property type="term" value="C:chloroplast stroma"/>
    <property type="evidence" value="ECO:0007669"/>
    <property type="project" value="UniProtKB-SubCell"/>
</dbReference>
<dbReference type="GO" id="GO:0009579">
    <property type="term" value="C:thylakoid"/>
    <property type="evidence" value="ECO:0007669"/>
    <property type="project" value="TreeGrafter"/>
</dbReference>
<dbReference type="GO" id="GO:0005524">
    <property type="term" value="F:ATP binding"/>
    <property type="evidence" value="ECO:0007669"/>
    <property type="project" value="UniProtKB-KW"/>
</dbReference>
<dbReference type="GO" id="GO:0016887">
    <property type="term" value="F:ATP hydrolysis activity"/>
    <property type="evidence" value="ECO:0007669"/>
    <property type="project" value="InterPro"/>
</dbReference>
<dbReference type="GO" id="GO:0046863">
    <property type="term" value="F:ribulose-1,5-bisphosphate carboxylase/oxygenase activator activity"/>
    <property type="evidence" value="ECO:0007669"/>
    <property type="project" value="TreeGrafter"/>
</dbReference>
<dbReference type="FunFam" id="1.10.8.1070:FF:000001">
    <property type="entry name" value="Ribulose bisphosphate carboxylase/oxygenase activase, chloroplastic"/>
    <property type="match status" value="1"/>
</dbReference>
<dbReference type="FunFam" id="3.40.50.300:FF:000258">
    <property type="entry name" value="Ribulose bisphosphate carboxylase/oxygenase activase, chloroplastic"/>
    <property type="match status" value="1"/>
</dbReference>
<dbReference type="Gene3D" id="1.10.8.1070">
    <property type="match status" value="1"/>
</dbReference>
<dbReference type="Gene3D" id="3.40.50.300">
    <property type="entry name" value="P-loop containing nucleotide triphosphate hydrolases"/>
    <property type="match status" value="1"/>
</dbReference>
<dbReference type="InterPro" id="IPR003959">
    <property type="entry name" value="ATPase_AAA_core"/>
</dbReference>
<dbReference type="InterPro" id="IPR027417">
    <property type="entry name" value="P-loop_NTPase"/>
</dbReference>
<dbReference type="InterPro" id="IPR044960">
    <property type="entry name" value="RCA-like"/>
</dbReference>
<dbReference type="InterPro" id="IPR048571">
    <property type="entry name" value="RuBisCO_activase_AAA_helical"/>
</dbReference>
<dbReference type="PANTHER" id="PTHR32429">
    <property type="match status" value="1"/>
</dbReference>
<dbReference type="PANTHER" id="PTHR32429:SF32">
    <property type="entry name" value="RIBULOSE BISPHOSPHATE CARBOXYLASE_OXYGENASE ACTIVASE, CHLOROPLASTIC"/>
    <property type="match status" value="1"/>
</dbReference>
<dbReference type="Pfam" id="PF00004">
    <property type="entry name" value="AAA"/>
    <property type="match status" value="1"/>
</dbReference>
<dbReference type="Pfam" id="PF21228">
    <property type="entry name" value="RuBisCO_activase_AAA_helical"/>
    <property type="match status" value="1"/>
</dbReference>
<dbReference type="SUPFAM" id="SSF52540">
    <property type="entry name" value="P-loop containing nucleoside triphosphate hydrolases"/>
    <property type="match status" value="1"/>
</dbReference>
<organism>
    <name type="scientific">Larrea tridentata</name>
    <name type="common">Creosote bush</name>
    <name type="synonym">Zygophyllum tridentatum</name>
    <dbReference type="NCBI Taxonomy" id="66636"/>
    <lineage>
        <taxon>Eukaryota</taxon>
        <taxon>Viridiplantae</taxon>
        <taxon>Streptophyta</taxon>
        <taxon>Embryophyta</taxon>
        <taxon>Tracheophyta</taxon>
        <taxon>Spermatophyta</taxon>
        <taxon>Magnoliopsida</taxon>
        <taxon>eudicotyledons</taxon>
        <taxon>Gunneridae</taxon>
        <taxon>Pentapetalae</taxon>
        <taxon>rosids</taxon>
        <taxon>fabids</taxon>
        <taxon>Zygophyllales</taxon>
        <taxon>Zygophyllaceae</taxon>
        <taxon>Larreoideae</taxon>
        <taxon>Larrea</taxon>
    </lineage>
</organism>
<comment type="function">
    <text evidence="1">Activation of RuBisCO (ribulose-1,5-bisphosphate carboxylase/oxygenase; EC 4.1.1.39) involves the ATP-dependent carboxylation of the epsilon-amino group of lysine leading to a carbamate structure.</text>
</comment>
<comment type="subcellular location">
    <subcellularLocation>
        <location evidence="1">Plastid</location>
        <location evidence="1">Chloroplast stroma</location>
    </subcellularLocation>
</comment>
<comment type="similarity">
    <text evidence="3">Belongs to the RuBisCO activase family.</text>
</comment>
<feature type="transit peptide" description="Chloroplast" evidence="2">
    <location>
        <begin position="1"/>
        <end position="56"/>
    </location>
</feature>
<feature type="chain" id="PRO_0000030234" description="Ribulose bisphosphate carboxylase/oxygenase activase 2, chloroplastic">
    <location>
        <begin position="57"/>
        <end position="435"/>
    </location>
</feature>
<feature type="binding site" evidence="2">
    <location>
        <begin position="165"/>
        <end position="172"/>
    </location>
    <ligand>
        <name>ATP</name>
        <dbReference type="ChEBI" id="CHEBI:30616"/>
    </ligand>
</feature>
<keyword id="KW-0067">ATP-binding</keyword>
<keyword id="KW-0150">Chloroplast</keyword>
<keyword id="KW-0547">Nucleotide-binding</keyword>
<keyword id="KW-0934">Plastid</keyword>
<keyword id="KW-0809">Transit peptide</keyword>
<accession>Q7X999</accession>
<name>RCA2_LARTR</name>
<evidence type="ECO:0000250" key="1"/>
<evidence type="ECO:0000255" key="2"/>
<evidence type="ECO:0000305" key="3"/>
<gene>
    <name type="primary">RCA2</name>
</gene>
<reference key="1">
    <citation type="journal article" date="2004" name="Plant Physiol.">
        <title>Relationship between the heat tolerance of photosynthesis and the thermal stability of rubisco activase in plants from contrasting thermal environments.</title>
        <authorList>
            <person name="Salvucci M.E."/>
            <person name="Crafts-Brandner S.J."/>
        </authorList>
    </citation>
    <scope>NUCLEOTIDE SEQUENCE [MRNA]</scope>
</reference>
<sequence>MAAAYSTVGAVNRAPLSLNGSGARASLVPSTAFFGSSLKKSAAKFPKASSGNFKIVAQEISEDQQTDKDKWKGLAYDISDDQQDITRGKGMVDTLFQAPMQSGTHYAVMSSYDYISQGLRQYNLDNNMDGFYIAPAFMDKLVVHITKNFLSLPNIKIPLILGIWGGKGQGKSFQCELVFAKMGINPIMMSAGELESGNAGEPAKLIRQRYREAADIIKKGKMCCLFINDLDAGAGRMGGTTQYTVNNQMVNATLMNIADNPTNVQLPGMYNKEENPRVPIIVTGNDFSTLYAPLIRDGRMEKFYWAPTREDRIGVCKGIFRTDNVPEEDIVKVVDQFPGQSIDFFGALRARVYDDEVRKWVSEVGVDTIGKKLVNSKEGPPTFEQPKMTIDKLLQYGNMLVEEQENVKRVQLADKYMSEAALGDANQDAIKRGTF</sequence>
<protein>
    <recommendedName>
        <fullName>Ribulose bisphosphate carboxylase/oxygenase activase 2, chloroplastic</fullName>
        <shortName>RA 2</shortName>
        <shortName>RuBisCO activase 2</shortName>
    </recommendedName>
    <alternativeName>
        <fullName>RuBisCO activase beta form</fullName>
    </alternativeName>
</protein>